<sequence>MSYFPWLTIIVVFPISAGLSIFFLPHRGNKVVRWYTICICLLELLLMTYVFCYHFQLNDPLIQLDEDYEWINIFDFHWRPGIDGLSIGPILLTGFITTLATLAAWPVTRDSRLFHFLMLAMYSGQIGLFSSRDLLLFFLMWELELIPVYLLLSMWGGKKRLYSATKFILYTAGGSVFLLMGVLGMGLYGSNEPTLNFETSANQSYPVSLEILFYFGFLIAYAVKLPIIPLHTWLPDTHGEAHYSTCMLLAGILLKMGAYGLVRINMELLPHAHSIFSPWLVLAGTLQIIYAASTSLGQVNLKKRIAYSSVSHMGFTIIGIGSITDTGLNGAILQLLSHGFLGAALFFLAGTSCDRIRLIYLDEMGGISIPMPKIFTMFSSFSMASLALPGMSGFVAEAVVFFGIITSQKFLFLPKILITFVMAIGMILTPIYLLSMLRQIFYGYKLFNMTNSYFMDSGPRELFVSICIFLPVIGIGIYPDFVLSLSVDKVEAILSNYFYR</sequence>
<proteinExistence type="inferred from homology"/>
<organism>
    <name type="scientific">Acorus calamus var. americanus</name>
    <name type="common">American sweet flag</name>
    <name type="synonym">Acorus americanus</name>
    <dbReference type="NCBI Taxonomy" id="263995"/>
    <lineage>
        <taxon>Eukaryota</taxon>
        <taxon>Viridiplantae</taxon>
        <taxon>Streptophyta</taxon>
        <taxon>Embryophyta</taxon>
        <taxon>Tracheophyta</taxon>
        <taxon>Spermatophyta</taxon>
        <taxon>Magnoliopsida</taxon>
        <taxon>Liliopsida</taxon>
        <taxon>Acoraceae</taxon>
        <taxon>Acorus</taxon>
    </lineage>
</organism>
<evidence type="ECO:0000255" key="1">
    <source>
        <dbReference type="HAMAP-Rule" id="MF_00491"/>
    </source>
</evidence>
<reference key="1">
    <citation type="submission" date="2007-11" db="EMBL/GenBank/DDBJ databases">
        <title>The complete chloroplast genome of Acorus americanus.</title>
        <authorList>
            <person name="Peery R.M."/>
            <person name="Chumley T.W."/>
            <person name="Kuehl J.V."/>
            <person name="Boore J.L."/>
            <person name="Raubeson L.A."/>
        </authorList>
    </citation>
    <scope>NUCLEOTIDE SEQUENCE [LARGE SCALE GENOMIC DNA]</scope>
</reference>
<keyword id="KW-0150">Chloroplast</keyword>
<keyword id="KW-0472">Membrane</keyword>
<keyword id="KW-0520">NAD</keyword>
<keyword id="KW-0521">NADP</keyword>
<keyword id="KW-0934">Plastid</keyword>
<keyword id="KW-0618">Plastoquinone</keyword>
<keyword id="KW-0874">Quinone</keyword>
<keyword id="KW-0793">Thylakoid</keyword>
<keyword id="KW-1278">Translocase</keyword>
<keyword id="KW-0812">Transmembrane</keyword>
<keyword id="KW-1133">Transmembrane helix</keyword>
<feature type="chain" id="PRO_0000343266" description="NAD(P)H-quinone oxidoreductase chain 4, chloroplastic">
    <location>
        <begin position="1"/>
        <end position="500"/>
    </location>
</feature>
<feature type="transmembrane region" description="Helical" evidence="1">
    <location>
        <begin position="4"/>
        <end position="24"/>
    </location>
</feature>
<feature type="transmembrane region" description="Helical" evidence="1">
    <location>
        <begin position="37"/>
        <end position="57"/>
    </location>
</feature>
<feature type="transmembrane region" description="Helical" evidence="1">
    <location>
        <begin position="87"/>
        <end position="107"/>
    </location>
</feature>
<feature type="transmembrane region" description="Helical" evidence="1">
    <location>
        <begin position="113"/>
        <end position="130"/>
    </location>
</feature>
<feature type="transmembrane region" description="Helical" evidence="1">
    <location>
        <begin position="134"/>
        <end position="154"/>
    </location>
</feature>
<feature type="transmembrane region" description="Helical" evidence="1">
    <location>
        <begin position="167"/>
        <end position="187"/>
    </location>
</feature>
<feature type="transmembrane region" description="Helical" evidence="1">
    <location>
        <begin position="211"/>
        <end position="231"/>
    </location>
</feature>
<feature type="transmembrane region" description="Helical" evidence="1">
    <location>
        <begin position="242"/>
        <end position="262"/>
    </location>
</feature>
<feature type="transmembrane region" description="Helical" evidence="1">
    <location>
        <begin position="272"/>
        <end position="292"/>
    </location>
</feature>
<feature type="transmembrane region" description="Helical" evidence="1">
    <location>
        <begin position="305"/>
        <end position="325"/>
    </location>
</feature>
<feature type="transmembrane region" description="Helical" evidence="1">
    <location>
        <begin position="330"/>
        <end position="350"/>
    </location>
</feature>
<feature type="transmembrane region" description="Helical" evidence="1">
    <location>
        <begin position="386"/>
        <end position="406"/>
    </location>
</feature>
<feature type="transmembrane region" description="Helical" evidence="1">
    <location>
        <begin position="416"/>
        <end position="436"/>
    </location>
</feature>
<feature type="transmembrane region" description="Helical" evidence="1">
    <location>
        <begin position="462"/>
        <end position="482"/>
    </location>
</feature>
<protein>
    <recommendedName>
        <fullName evidence="1">NAD(P)H-quinone oxidoreductase chain 4, chloroplastic</fullName>
        <ecNumber evidence="1">7.1.1.-</ecNumber>
    </recommendedName>
    <alternativeName>
        <fullName evidence="1">NAD(P)H dehydrogenase, chain 4</fullName>
    </alternativeName>
    <alternativeName>
        <fullName evidence="1">NADH-plastoquinone oxidoreductase chain 4</fullName>
    </alternativeName>
</protein>
<geneLocation type="chloroplast"/>
<dbReference type="EC" id="7.1.1.-" evidence="1"/>
<dbReference type="EMBL" id="EU273602">
    <property type="protein sequence ID" value="ABX38793.1"/>
    <property type="molecule type" value="Genomic_DNA"/>
</dbReference>
<dbReference type="RefSeq" id="YP_001586231.1">
    <property type="nucleotide sequence ID" value="NC_010093.1"/>
</dbReference>
<dbReference type="SMR" id="A9LYF0"/>
<dbReference type="GeneID" id="5777744"/>
<dbReference type="GO" id="GO:0009535">
    <property type="term" value="C:chloroplast thylakoid membrane"/>
    <property type="evidence" value="ECO:0007669"/>
    <property type="project" value="UniProtKB-SubCell"/>
</dbReference>
<dbReference type="GO" id="GO:0008137">
    <property type="term" value="F:NADH dehydrogenase (ubiquinone) activity"/>
    <property type="evidence" value="ECO:0007669"/>
    <property type="project" value="InterPro"/>
</dbReference>
<dbReference type="GO" id="GO:0048039">
    <property type="term" value="F:ubiquinone binding"/>
    <property type="evidence" value="ECO:0007669"/>
    <property type="project" value="TreeGrafter"/>
</dbReference>
<dbReference type="GO" id="GO:0042773">
    <property type="term" value="P:ATP synthesis coupled electron transport"/>
    <property type="evidence" value="ECO:0007669"/>
    <property type="project" value="InterPro"/>
</dbReference>
<dbReference type="GO" id="GO:0015990">
    <property type="term" value="P:electron transport coupled proton transport"/>
    <property type="evidence" value="ECO:0007669"/>
    <property type="project" value="TreeGrafter"/>
</dbReference>
<dbReference type="HAMAP" id="MF_00491">
    <property type="entry name" value="NDH1_NuoM"/>
    <property type="match status" value="1"/>
</dbReference>
<dbReference type="InterPro" id="IPR022997">
    <property type="entry name" value="NADH_Q_OxRdtase_chain4"/>
</dbReference>
<dbReference type="InterPro" id="IPR010227">
    <property type="entry name" value="NADH_Q_OxRdtase_chainM/4"/>
</dbReference>
<dbReference type="InterPro" id="IPR003918">
    <property type="entry name" value="NADH_UbQ_OxRdtase"/>
</dbReference>
<dbReference type="InterPro" id="IPR001750">
    <property type="entry name" value="ND/Mrp_TM"/>
</dbReference>
<dbReference type="NCBIfam" id="TIGR01972">
    <property type="entry name" value="NDH_I_M"/>
    <property type="match status" value="1"/>
</dbReference>
<dbReference type="PANTHER" id="PTHR43507:SF21">
    <property type="entry name" value="NAD(P)H-QUINONE OXIDOREDUCTASE CHAIN 4, CHLOROPLASTIC"/>
    <property type="match status" value="1"/>
</dbReference>
<dbReference type="PANTHER" id="PTHR43507">
    <property type="entry name" value="NADH-UBIQUINONE OXIDOREDUCTASE CHAIN 4"/>
    <property type="match status" value="1"/>
</dbReference>
<dbReference type="Pfam" id="PF00361">
    <property type="entry name" value="Proton_antipo_M"/>
    <property type="match status" value="1"/>
</dbReference>
<dbReference type="PRINTS" id="PR01437">
    <property type="entry name" value="NUOXDRDTASE4"/>
</dbReference>
<name>NU4C_ACOCI</name>
<accession>A9LYF0</accession>
<gene>
    <name evidence="1" type="primary">ndhD</name>
</gene>
<comment type="catalytic activity">
    <reaction evidence="1">
        <text>a plastoquinone + NADH + (n+1) H(+)(in) = a plastoquinol + NAD(+) + n H(+)(out)</text>
        <dbReference type="Rhea" id="RHEA:42608"/>
        <dbReference type="Rhea" id="RHEA-COMP:9561"/>
        <dbReference type="Rhea" id="RHEA-COMP:9562"/>
        <dbReference type="ChEBI" id="CHEBI:15378"/>
        <dbReference type="ChEBI" id="CHEBI:17757"/>
        <dbReference type="ChEBI" id="CHEBI:57540"/>
        <dbReference type="ChEBI" id="CHEBI:57945"/>
        <dbReference type="ChEBI" id="CHEBI:62192"/>
    </reaction>
</comment>
<comment type="catalytic activity">
    <reaction evidence="1">
        <text>a plastoquinone + NADPH + (n+1) H(+)(in) = a plastoquinol + NADP(+) + n H(+)(out)</text>
        <dbReference type="Rhea" id="RHEA:42612"/>
        <dbReference type="Rhea" id="RHEA-COMP:9561"/>
        <dbReference type="Rhea" id="RHEA-COMP:9562"/>
        <dbReference type="ChEBI" id="CHEBI:15378"/>
        <dbReference type="ChEBI" id="CHEBI:17757"/>
        <dbReference type="ChEBI" id="CHEBI:57783"/>
        <dbReference type="ChEBI" id="CHEBI:58349"/>
        <dbReference type="ChEBI" id="CHEBI:62192"/>
    </reaction>
</comment>
<comment type="subcellular location">
    <subcellularLocation>
        <location evidence="1">Plastid</location>
        <location evidence="1">Chloroplast thylakoid membrane</location>
        <topology evidence="1">Multi-pass membrane protein</topology>
    </subcellularLocation>
</comment>
<comment type="similarity">
    <text evidence="1">Belongs to the complex I subunit 4 family.</text>
</comment>